<feature type="chain" id="PRO_0000298518" description="NADH-quinone oxidoreductase subunit I">
    <location>
        <begin position="1"/>
        <end position="211"/>
    </location>
</feature>
<feature type="domain" description="4Fe-4S ferredoxin-type 1" evidence="1">
    <location>
        <begin position="71"/>
        <end position="101"/>
    </location>
</feature>
<feature type="domain" description="4Fe-4S ferredoxin-type 2" evidence="1">
    <location>
        <begin position="117"/>
        <end position="146"/>
    </location>
</feature>
<feature type="region of interest" description="Disordered" evidence="2">
    <location>
        <begin position="1"/>
        <end position="27"/>
    </location>
</feature>
<feature type="binding site" evidence="1">
    <location>
        <position position="81"/>
    </location>
    <ligand>
        <name>[4Fe-4S] cluster</name>
        <dbReference type="ChEBI" id="CHEBI:49883"/>
        <label>1</label>
    </ligand>
</feature>
<feature type="binding site" evidence="1">
    <location>
        <position position="84"/>
    </location>
    <ligand>
        <name>[4Fe-4S] cluster</name>
        <dbReference type="ChEBI" id="CHEBI:49883"/>
        <label>1</label>
    </ligand>
</feature>
<feature type="binding site" evidence="1">
    <location>
        <position position="87"/>
    </location>
    <ligand>
        <name>[4Fe-4S] cluster</name>
        <dbReference type="ChEBI" id="CHEBI:49883"/>
        <label>1</label>
    </ligand>
</feature>
<feature type="binding site" evidence="1">
    <location>
        <position position="91"/>
    </location>
    <ligand>
        <name>[4Fe-4S] cluster</name>
        <dbReference type="ChEBI" id="CHEBI:49883"/>
        <label>2</label>
    </ligand>
</feature>
<feature type="binding site" evidence="1">
    <location>
        <position position="126"/>
    </location>
    <ligand>
        <name>[4Fe-4S] cluster</name>
        <dbReference type="ChEBI" id="CHEBI:49883"/>
        <label>2</label>
    </ligand>
</feature>
<feature type="binding site" evidence="1">
    <location>
        <position position="129"/>
    </location>
    <ligand>
        <name>[4Fe-4S] cluster</name>
        <dbReference type="ChEBI" id="CHEBI:49883"/>
        <label>2</label>
    </ligand>
</feature>
<feature type="binding site" evidence="1">
    <location>
        <position position="132"/>
    </location>
    <ligand>
        <name>[4Fe-4S] cluster</name>
        <dbReference type="ChEBI" id="CHEBI:49883"/>
        <label>2</label>
    </ligand>
</feature>
<feature type="binding site" evidence="1">
    <location>
        <position position="136"/>
    </location>
    <ligand>
        <name>[4Fe-4S] cluster</name>
        <dbReference type="ChEBI" id="CHEBI:49883"/>
        <label>1</label>
    </ligand>
</feature>
<name>NUOI_MYCTA</name>
<accession>A5U7G9</accession>
<protein>
    <recommendedName>
        <fullName evidence="1">NADH-quinone oxidoreductase subunit I</fullName>
        <ecNumber evidence="1">7.1.1.-</ecNumber>
    </recommendedName>
    <alternativeName>
        <fullName evidence="1">NADH dehydrogenase I subunit I</fullName>
    </alternativeName>
    <alternativeName>
        <fullName evidence="1">NDH-1 subunit I</fullName>
    </alternativeName>
</protein>
<keyword id="KW-0004">4Fe-4S</keyword>
<keyword id="KW-1003">Cell membrane</keyword>
<keyword id="KW-0408">Iron</keyword>
<keyword id="KW-0411">Iron-sulfur</keyword>
<keyword id="KW-0472">Membrane</keyword>
<keyword id="KW-0479">Metal-binding</keyword>
<keyword id="KW-0520">NAD</keyword>
<keyword id="KW-0874">Quinone</keyword>
<keyword id="KW-1185">Reference proteome</keyword>
<keyword id="KW-0677">Repeat</keyword>
<keyword id="KW-1278">Translocase</keyword>
<organism>
    <name type="scientific">Mycobacterium tuberculosis (strain ATCC 25177 / H37Ra)</name>
    <dbReference type="NCBI Taxonomy" id="419947"/>
    <lineage>
        <taxon>Bacteria</taxon>
        <taxon>Bacillati</taxon>
        <taxon>Actinomycetota</taxon>
        <taxon>Actinomycetes</taxon>
        <taxon>Mycobacteriales</taxon>
        <taxon>Mycobacteriaceae</taxon>
        <taxon>Mycobacterium</taxon>
        <taxon>Mycobacterium tuberculosis complex</taxon>
    </lineage>
</organism>
<sequence>MANTDRPALPHKRAVPPSRADSGPRRRRTKLLDAVAGFGVTLGSMFKKTVTEEYPERPGPVAARYHGRHQLNRYPDGLEKCIGCELCAWACPADAIYVEGADNTEEERFSPGERYGRVYQINYLRCIGCGLCIEACPTRALTMTYDYELADDNRADLIYEKDRLLAPLLPEMAAPPHPRTPGATDKDYYLGNVTAEGLRGVRESQTTGDSR</sequence>
<gene>
    <name evidence="1" type="primary">nuoI</name>
    <name type="ordered locus">MRA_3186</name>
</gene>
<comment type="function">
    <text evidence="1">NDH-1 shuttles electrons from NADH, via FMN and iron-sulfur (Fe-S) centers, to quinones in the respiratory chain. The immediate electron acceptor for the enzyme in this species is believed to be menaquinone. Couples the redox reaction to proton translocation (for every two electrons transferred, four hydrogen ions are translocated across the cytoplasmic membrane), and thus conserves the redox energy in a proton gradient.</text>
</comment>
<comment type="catalytic activity">
    <reaction evidence="1">
        <text>a quinone + NADH + 5 H(+)(in) = a quinol + NAD(+) + 4 H(+)(out)</text>
        <dbReference type="Rhea" id="RHEA:57888"/>
        <dbReference type="ChEBI" id="CHEBI:15378"/>
        <dbReference type="ChEBI" id="CHEBI:24646"/>
        <dbReference type="ChEBI" id="CHEBI:57540"/>
        <dbReference type="ChEBI" id="CHEBI:57945"/>
        <dbReference type="ChEBI" id="CHEBI:132124"/>
    </reaction>
</comment>
<comment type="cofactor">
    <cofactor evidence="1">
        <name>[4Fe-4S] cluster</name>
        <dbReference type="ChEBI" id="CHEBI:49883"/>
    </cofactor>
    <text evidence="1">Binds 2 [4Fe-4S] clusters per subunit.</text>
</comment>
<comment type="subunit">
    <text evidence="1">NDH-1 is composed of 14 different subunits. Subunits NuoA, H, J, K, L, M, N constitute the membrane sector of the complex.</text>
</comment>
<comment type="subcellular location">
    <subcellularLocation>
        <location evidence="1">Cell membrane</location>
        <topology evidence="1">Peripheral membrane protein</topology>
    </subcellularLocation>
</comment>
<comment type="similarity">
    <text evidence="1">Belongs to the complex I 23 kDa subunit family.</text>
</comment>
<proteinExistence type="inferred from homology"/>
<dbReference type="EC" id="7.1.1.-" evidence="1"/>
<dbReference type="EMBL" id="CP000611">
    <property type="protein sequence ID" value="ABQ74969.1"/>
    <property type="molecule type" value="Genomic_DNA"/>
</dbReference>
<dbReference type="RefSeq" id="WP_003899938.1">
    <property type="nucleotide sequence ID" value="NZ_CP016972.1"/>
</dbReference>
<dbReference type="SMR" id="A5U7G9"/>
<dbReference type="KEGG" id="mra:MRA_3186"/>
<dbReference type="eggNOG" id="COG1143">
    <property type="taxonomic scope" value="Bacteria"/>
</dbReference>
<dbReference type="HOGENOM" id="CLU_067218_4_0_11"/>
<dbReference type="Proteomes" id="UP000001988">
    <property type="component" value="Chromosome"/>
</dbReference>
<dbReference type="GO" id="GO:0005886">
    <property type="term" value="C:plasma membrane"/>
    <property type="evidence" value="ECO:0007669"/>
    <property type="project" value="UniProtKB-SubCell"/>
</dbReference>
<dbReference type="GO" id="GO:0051539">
    <property type="term" value="F:4 iron, 4 sulfur cluster binding"/>
    <property type="evidence" value="ECO:0007669"/>
    <property type="project" value="UniProtKB-KW"/>
</dbReference>
<dbReference type="GO" id="GO:0005506">
    <property type="term" value="F:iron ion binding"/>
    <property type="evidence" value="ECO:0007669"/>
    <property type="project" value="UniProtKB-UniRule"/>
</dbReference>
<dbReference type="GO" id="GO:0050136">
    <property type="term" value="F:NADH:ubiquinone reductase (non-electrogenic) activity"/>
    <property type="evidence" value="ECO:0007669"/>
    <property type="project" value="UniProtKB-UniRule"/>
</dbReference>
<dbReference type="GO" id="GO:0048038">
    <property type="term" value="F:quinone binding"/>
    <property type="evidence" value="ECO:0007669"/>
    <property type="project" value="UniProtKB-KW"/>
</dbReference>
<dbReference type="GO" id="GO:0009060">
    <property type="term" value="P:aerobic respiration"/>
    <property type="evidence" value="ECO:0007669"/>
    <property type="project" value="TreeGrafter"/>
</dbReference>
<dbReference type="FunFam" id="3.30.70.3270:FF:000007">
    <property type="entry name" value="NADH-quinone oxidoreductase subunit I"/>
    <property type="match status" value="1"/>
</dbReference>
<dbReference type="Gene3D" id="3.30.70.3270">
    <property type="match status" value="1"/>
</dbReference>
<dbReference type="HAMAP" id="MF_01351">
    <property type="entry name" value="NDH1_NuoI"/>
    <property type="match status" value="1"/>
</dbReference>
<dbReference type="InterPro" id="IPR017896">
    <property type="entry name" value="4Fe4S_Fe-S-bd"/>
</dbReference>
<dbReference type="InterPro" id="IPR017900">
    <property type="entry name" value="4Fe4S_Fe_S_CS"/>
</dbReference>
<dbReference type="InterPro" id="IPR010226">
    <property type="entry name" value="NADH_quinone_OxRdtase_chainI"/>
</dbReference>
<dbReference type="NCBIfam" id="TIGR01971">
    <property type="entry name" value="NuoI"/>
    <property type="match status" value="1"/>
</dbReference>
<dbReference type="NCBIfam" id="NF004537">
    <property type="entry name" value="PRK05888.1-3"/>
    <property type="match status" value="1"/>
</dbReference>
<dbReference type="PANTHER" id="PTHR10849:SF20">
    <property type="entry name" value="NADH DEHYDROGENASE [UBIQUINONE] IRON-SULFUR PROTEIN 8, MITOCHONDRIAL"/>
    <property type="match status" value="1"/>
</dbReference>
<dbReference type="PANTHER" id="PTHR10849">
    <property type="entry name" value="NADH DEHYDROGENASE UBIQUINONE IRON-SULFUR PROTEIN 8, MITOCHONDRIAL"/>
    <property type="match status" value="1"/>
</dbReference>
<dbReference type="Pfam" id="PF12838">
    <property type="entry name" value="Fer4_7"/>
    <property type="match status" value="1"/>
</dbReference>
<dbReference type="SUPFAM" id="SSF54862">
    <property type="entry name" value="4Fe-4S ferredoxins"/>
    <property type="match status" value="1"/>
</dbReference>
<dbReference type="PROSITE" id="PS00198">
    <property type="entry name" value="4FE4S_FER_1"/>
    <property type="match status" value="2"/>
</dbReference>
<dbReference type="PROSITE" id="PS51379">
    <property type="entry name" value="4FE4S_FER_2"/>
    <property type="match status" value="2"/>
</dbReference>
<reference key="1">
    <citation type="journal article" date="2008" name="PLoS ONE">
        <title>Genetic basis of virulence attenuation revealed by comparative genomic analysis of Mycobacterium tuberculosis strain H37Ra versus H37Rv.</title>
        <authorList>
            <person name="Zheng H."/>
            <person name="Lu L."/>
            <person name="Wang B."/>
            <person name="Pu S."/>
            <person name="Zhang X."/>
            <person name="Zhu G."/>
            <person name="Shi W."/>
            <person name="Zhang L."/>
            <person name="Wang H."/>
            <person name="Wang S."/>
            <person name="Zhao G."/>
            <person name="Zhang Y."/>
        </authorList>
    </citation>
    <scope>NUCLEOTIDE SEQUENCE [LARGE SCALE GENOMIC DNA]</scope>
    <source>
        <strain>ATCC 25177 / H37Ra</strain>
    </source>
</reference>
<evidence type="ECO:0000255" key="1">
    <source>
        <dbReference type="HAMAP-Rule" id="MF_01351"/>
    </source>
</evidence>
<evidence type="ECO:0000256" key="2">
    <source>
        <dbReference type="SAM" id="MobiDB-lite"/>
    </source>
</evidence>